<comment type="function">
    <text evidence="1">Involved in the maturation of [NiFe] hydrogenases. Required for nickel insertion into the metal center of the hydrogenase.</text>
</comment>
<comment type="similarity">
    <text evidence="1">Belongs to the HypA/HybF family.</text>
</comment>
<reference key="1">
    <citation type="journal article" date="2005" name="Nat. Biotechnol.">
        <title>Genome sequence of the chlorinated compound-respiring bacterium Dehalococcoides species strain CBDB1.</title>
        <authorList>
            <person name="Kube M."/>
            <person name="Beck A."/>
            <person name="Zinder S.H."/>
            <person name="Kuhl H."/>
            <person name="Reinhardt R."/>
            <person name="Adrian L."/>
        </authorList>
    </citation>
    <scope>NUCLEOTIDE SEQUENCE [LARGE SCALE GENOMIC DNA]</scope>
    <source>
        <strain>CBDB1</strain>
    </source>
</reference>
<accession>Q3ZYW6</accession>
<feature type="chain" id="PRO_1000023826" description="Hydrogenase maturation factor HypA">
    <location>
        <begin position="1"/>
        <end position="119"/>
    </location>
</feature>
<feature type="binding site" evidence="1">
    <location>
        <position position="2"/>
    </location>
    <ligand>
        <name>Ni(2+)</name>
        <dbReference type="ChEBI" id="CHEBI:49786"/>
    </ligand>
</feature>
<feature type="binding site" evidence="1">
    <location>
        <position position="73"/>
    </location>
    <ligand>
        <name>Zn(2+)</name>
        <dbReference type="ChEBI" id="CHEBI:29105"/>
    </ligand>
</feature>
<feature type="binding site" evidence="1">
    <location>
        <position position="76"/>
    </location>
    <ligand>
        <name>Zn(2+)</name>
        <dbReference type="ChEBI" id="CHEBI:29105"/>
    </ligand>
</feature>
<feature type="binding site" evidence="1">
    <location>
        <position position="89"/>
    </location>
    <ligand>
        <name>Zn(2+)</name>
        <dbReference type="ChEBI" id="CHEBI:29105"/>
    </ligand>
</feature>
<feature type="binding site" evidence="1">
    <location>
        <position position="92"/>
    </location>
    <ligand>
        <name>Zn(2+)</name>
        <dbReference type="ChEBI" id="CHEBI:29105"/>
    </ligand>
</feature>
<organism>
    <name type="scientific">Dehalococcoides mccartyi (strain CBDB1)</name>
    <dbReference type="NCBI Taxonomy" id="255470"/>
    <lineage>
        <taxon>Bacteria</taxon>
        <taxon>Bacillati</taxon>
        <taxon>Chloroflexota</taxon>
        <taxon>Dehalococcoidia</taxon>
        <taxon>Dehalococcoidales</taxon>
        <taxon>Dehalococcoidaceae</taxon>
        <taxon>Dehalococcoides</taxon>
    </lineage>
</organism>
<keyword id="KW-0479">Metal-binding</keyword>
<keyword id="KW-0533">Nickel</keyword>
<keyword id="KW-0862">Zinc</keyword>
<name>HYPA_DEHMC</name>
<protein>
    <recommendedName>
        <fullName evidence="1">Hydrogenase maturation factor HypA</fullName>
    </recommendedName>
</protein>
<sequence>MHELSITEELLKTIVAKAEEAKARNVSRINLVIGEYAGVVEDSVKMCFEILSQDTIANGAVLEFSRIPAKFRCRLCGHTFPSGQNLLVCPECQGWNAEVIAGNEFFIESIEVDDESQSS</sequence>
<evidence type="ECO:0000255" key="1">
    <source>
        <dbReference type="HAMAP-Rule" id="MF_00213"/>
    </source>
</evidence>
<proteinExistence type="inferred from homology"/>
<gene>
    <name evidence="1" type="primary">hypA</name>
    <name type="ordered locus">cbdbA1395</name>
</gene>
<dbReference type="EMBL" id="AJ965256">
    <property type="protein sequence ID" value="CAI83438.1"/>
    <property type="molecule type" value="Genomic_DNA"/>
</dbReference>
<dbReference type="RefSeq" id="WP_011309789.1">
    <property type="nucleotide sequence ID" value="NC_007356.1"/>
</dbReference>
<dbReference type="SMR" id="Q3ZYW6"/>
<dbReference type="KEGG" id="deh:cbdbA1395"/>
<dbReference type="HOGENOM" id="CLU_126929_4_0_0"/>
<dbReference type="Proteomes" id="UP000000433">
    <property type="component" value="Chromosome"/>
</dbReference>
<dbReference type="GO" id="GO:0016151">
    <property type="term" value="F:nickel cation binding"/>
    <property type="evidence" value="ECO:0007669"/>
    <property type="project" value="UniProtKB-UniRule"/>
</dbReference>
<dbReference type="GO" id="GO:0008270">
    <property type="term" value="F:zinc ion binding"/>
    <property type="evidence" value="ECO:0007669"/>
    <property type="project" value="UniProtKB-UniRule"/>
</dbReference>
<dbReference type="GO" id="GO:0051604">
    <property type="term" value="P:protein maturation"/>
    <property type="evidence" value="ECO:0007669"/>
    <property type="project" value="InterPro"/>
</dbReference>
<dbReference type="GO" id="GO:0036211">
    <property type="term" value="P:protein modification process"/>
    <property type="evidence" value="ECO:0007669"/>
    <property type="project" value="UniProtKB-UniRule"/>
</dbReference>
<dbReference type="Gene3D" id="3.30.2320.80">
    <property type="match status" value="1"/>
</dbReference>
<dbReference type="HAMAP" id="MF_00213">
    <property type="entry name" value="HypA_HybF"/>
    <property type="match status" value="1"/>
</dbReference>
<dbReference type="InterPro" id="IPR020538">
    <property type="entry name" value="Hydgase_Ni_incorp_HypA/HybF_CS"/>
</dbReference>
<dbReference type="InterPro" id="IPR000688">
    <property type="entry name" value="HypA/HybF"/>
</dbReference>
<dbReference type="NCBIfam" id="TIGR00100">
    <property type="entry name" value="hypA"/>
    <property type="match status" value="1"/>
</dbReference>
<dbReference type="PANTHER" id="PTHR34535">
    <property type="entry name" value="HYDROGENASE MATURATION FACTOR HYPA"/>
    <property type="match status" value="1"/>
</dbReference>
<dbReference type="PANTHER" id="PTHR34535:SF3">
    <property type="entry name" value="HYDROGENASE MATURATION FACTOR HYPA"/>
    <property type="match status" value="1"/>
</dbReference>
<dbReference type="Pfam" id="PF01155">
    <property type="entry name" value="HypA"/>
    <property type="match status" value="1"/>
</dbReference>
<dbReference type="PIRSF" id="PIRSF004761">
    <property type="entry name" value="Hydrgn_mat_HypA"/>
    <property type="match status" value="1"/>
</dbReference>
<dbReference type="PROSITE" id="PS01249">
    <property type="entry name" value="HYPA"/>
    <property type="match status" value="1"/>
</dbReference>